<accession>A4VHL9</accession>
<protein>
    <recommendedName>
        <fullName evidence="1">Large ribosomal subunit protein uL11</fullName>
    </recommendedName>
    <alternativeName>
        <fullName evidence="2">50S ribosomal protein L11</fullName>
    </alternativeName>
</protein>
<gene>
    <name evidence="1" type="primary">rplK</name>
    <name type="ordered locus">PST_0773</name>
</gene>
<proteinExistence type="inferred from homology"/>
<evidence type="ECO:0000255" key="1">
    <source>
        <dbReference type="HAMAP-Rule" id="MF_00736"/>
    </source>
</evidence>
<evidence type="ECO:0000305" key="2"/>
<sequence length="143" mass="14965">MAKKIQAYIKLQVKAGQANPSPPVGPALGQHGVNIMEFCKAFNARTQGQEPGLPTPVIITVYSDRSFTFETKSTPAAVLLKKAAGITSGSARPNTQKVGTVTRAQLEEIAKAKQADLTAAEMEAAVRTIAGSARSMGLNVEGV</sequence>
<keyword id="KW-0488">Methylation</keyword>
<keyword id="KW-1185">Reference proteome</keyword>
<keyword id="KW-0687">Ribonucleoprotein</keyword>
<keyword id="KW-0689">Ribosomal protein</keyword>
<keyword id="KW-0694">RNA-binding</keyword>
<keyword id="KW-0699">rRNA-binding</keyword>
<comment type="function">
    <text evidence="1">Forms part of the ribosomal stalk which helps the ribosome interact with GTP-bound translation factors.</text>
</comment>
<comment type="subunit">
    <text evidence="1">Part of the ribosomal stalk of the 50S ribosomal subunit. Interacts with L10 and the large rRNA to form the base of the stalk. L10 forms an elongated spine to which L12 dimers bind in a sequential fashion forming a multimeric L10(L12)X complex.</text>
</comment>
<comment type="PTM">
    <text evidence="1">One or more lysine residues are methylated.</text>
</comment>
<comment type="similarity">
    <text evidence="1">Belongs to the universal ribosomal protein uL11 family.</text>
</comment>
<organism>
    <name type="scientific">Stutzerimonas stutzeri (strain A1501)</name>
    <name type="common">Pseudomonas stutzeri</name>
    <dbReference type="NCBI Taxonomy" id="379731"/>
    <lineage>
        <taxon>Bacteria</taxon>
        <taxon>Pseudomonadati</taxon>
        <taxon>Pseudomonadota</taxon>
        <taxon>Gammaproteobacteria</taxon>
        <taxon>Pseudomonadales</taxon>
        <taxon>Pseudomonadaceae</taxon>
        <taxon>Stutzerimonas</taxon>
    </lineage>
</organism>
<name>RL11_STUS1</name>
<feature type="chain" id="PRO_1000046247" description="Large ribosomal subunit protein uL11">
    <location>
        <begin position="1"/>
        <end position="143"/>
    </location>
</feature>
<dbReference type="EMBL" id="CP000304">
    <property type="protein sequence ID" value="ABP78470.1"/>
    <property type="molecule type" value="Genomic_DNA"/>
</dbReference>
<dbReference type="RefSeq" id="WP_011911977.1">
    <property type="nucleotide sequence ID" value="NC_009434.1"/>
</dbReference>
<dbReference type="SMR" id="A4VHL9"/>
<dbReference type="GeneID" id="66819915"/>
<dbReference type="KEGG" id="psa:PST_0773"/>
<dbReference type="eggNOG" id="COG0080">
    <property type="taxonomic scope" value="Bacteria"/>
</dbReference>
<dbReference type="HOGENOM" id="CLU_074237_2_0_6"/>
<dbReference type="Proteomes" id="UP000000233">
    <property type="component" value="Chromosome"/>
</dbReference>
<dbReference type="GO" id="GO:0022625">
    <property type="term" value="C:cytosolic large ribosomal subunit"/>
    <property type="evidence" value="ECO:0007669"/>
    <property type="project" value="TreeGrafter"/>
</dbReference>
<dbReference type="GO" id="GO:0070180">
    <property type="term" value="F:large ribosomal subunit rRNA binding"/>
    <property type="evidence" value="ECO:0007669"/>
    <property type="project" value="UniProtKB-UniRule"/>
</dbReference>
<dbReference type="GO" id="GO:0003735">
    <property type="term" value="F:structural constituent of ribosome"/>
    <property type="evidence" value="ECO:0007669"/>
    <property type="project" value="InterPro"/>
</dbReference>
<dbReference type="GO" id="GO:0006412">
    <property type="term" value="P:translation"/>
    <property type="evidence" value="ECO:0007669"/>
    <property type="project" value="UniProtKB-UniRule"/>
</dbReference>
<dbReference type="CDD" id="cd00349">
    <property type="entry name" value="Ribosomal_L11"/>
    <property type="match status" value="1"/>
</dbReference>
<dbReference type="FunFam" id="1.10.10.250:FF:000001">
    <property type="entry name" value="50S ribosomal protein L11"/>
    <property type="match status" value="1"/>
</dbReference>
<dbReference type="FunFam" id="3.30.1550.10:FF:000001">
    <property type="entry name" value="50S ribosomal protein L11"/>
    <property type="match status" value="1"/>
</dbReference>
<dbReference type="Gene3D" id="1.10.10.250">
    <property type="entry name" value="Ribosomal protein L11, C-terminal domain"/>
    <property type="match status" value="1"/>
</dbReference>
<dbReference type="Gene3D" id="3.30.1550.10">
    <property type="entry name" value="Ribosomal protein L11/L12, N-terminal domain"/>
    <property type="match status" value="1"/>
</dbReference>
<dbReference type="HAMAP" id="MF_00736">
    <property type="entry name" value="Ribosomal_uL11"/>
    <property type="match status" value="1"/>
</dbReference>
<dbReference type="InterPro" id="IPR000911">
    <property type="entry name" value="Ribosomal_uL11"/>
</dbReference>
<dbReference type="InterPro" id="IPR006519">
    <property type="entry name" value="Ribosomal_uL11_bac-typ"/>
</dbReference>
<dbReference type="InterPro" id="IPR020783">
    <property type="entry name" value="Ribosomal_uL11_C"/>
</dbReference>
<dbReference type="InterPro" id="IPR036769">
    <property type="entry name" value="Ribosomal_uL11_C_sf"/>
</dbReference>
<dbReference type="InterPro" id="IPR020785">
    <property type="entry name" value="Ribosomal_uL11_CS"/>
</dbReference>
<dbReference type="InterPro" id="IPR020784">
    <property type="entry name" value="Ribosomal_uL11_N"/>
</dbReference>
<dbReference type="InterPro" id="IPR036796">
    <property type="entry name" value="Ribosomal_uL11_N_sf"/>
</dbReference>
<dbReference type="NCBIfam" id="TIGR01632">
    <property type="entry name" value="L11_bact"/>
    <property type="match status" value="1"/>
</dbReference>
<dbReference type="PANTHER" id="PTHR11661">
    <property type="entry name" value="60S RIBOSOMAL PROTEIN L12"/>
    <property type="match status" value="1"/>
</dbReference>
<dbReference type="PANTHER" id="PTHR11661:SF1">
    <property type="entry name" value="LARGE RIBOSOMAL SUBUNIT PROTEIN UL11M"/>
    <property type="match status" value="1"/>
</dbReference>
<dbReference type="Pfam" id="PF00298">
    <property type="entry name" value="Ribosomal_L11"/>
    <property type="match status" value="1"/>
</dbReference>
<dbReference type="Pfam" id="PF03946">
    <property type="entry name" value="Ribosomal_L11_N"/>
    <property type="match status" value="1"/>
</dbReference>
<dbReference type="SMART" id="SM00649">
    <property type="entry name" value="RL11"/>
    <property type="match status" value="1"/>
</dbReference>
<dbReference type="SUPFAM" id="SSF54747">
    <property type="entry name" value="Ribosomal L11/L12e N-terminal domain"/>
    <property type="match status" value="1"/>
</dbReference>
<dbReference type="SUPFAM" id="SSF46906">
    <property type="entry name" value="Ribosomal protein L11, C-terminal domain"/>
    <property type="match status" value="1"/>
</dbReference>
<dbReference type="PROSITE" id="PS00359">
    <property type="entry name" value="RIBOSOMAL_L11"/>
    <property type="match status" value="1"/>
</dbReference>
<reference key="1">
    <citation type="journal article" date="2008" name="Proc. Natl. Acad. Sci. U.S.A.">
        <title>Nitrogen fixation island and rhizosphere competence traits in the genome of root-associated Pseudomonas stutzeri A1501.</title>
        <authorList>
            <person name="Yan Y."/>
            <person name="Yang J."/>
            <person name="Dou Y."/>
            <person name="Chen M."/>
            <person name="Ping S."/>
            <person name="Peng J."/>
            <person name="Lu W."/>
            <person name="Zhang W."/>
            <person name="Yao Z."/>
            <person name="Li H."/>
            <person name="Liu W."/>
            <person name="He S."/>
            <person name="Geng L."/>
            <person name="Zhang X."/>
            <person name="Yang F."/>
            <person name="Yu H."/>
            <person name="Zhan Y."/>
            <person name="Li D."/>
            <person name="Lin Z."/>
            <person name="Wang Y."/>
            <person name="Elmerich C."/>
            <person name="Lin M."/>
            <person name="Jin Q."/>
        </authorList>
    </citation>
    <scope>NUCLEOTIDE SEQUENCE [LARGE SCALE GENOMIC DNA]</scope>
    <source>
        <strain>A1501</strain>
    </source>
</reference>